<organism>
    <name type="scientific">Saccharomyces cerevisiae (strain ATCC 204508 / S288c)</name>
    <name type="common">Baker's yeast</name>
    <dbReference type="NCBI Taxonomy" id="559292"/>
    <lineage>
        <taxon>Eukaryota</taxon>
        <taxon>Fungi</taxon>
        <taxon>Dikarya</taxon>
        <taxon>Ascomycota</taxon>
        <taxon>Saccharomycotina</taxon>
        <taxon>Saccharomycetes</taxon>
        <taxon>Saccharomycetales</taxon>
        <taxon>Saccharomycetaceae</taxon>
        <taxon>Saccharomyces</taxon>
    </lineage>
</organism>
<name>THI7_YEAST</name>
<reference key="1">
    <citation type="journal article" date="1997" name="J. Biol. Chem.">
        <title>Isolation and characterization of a thiamin transport gene, THI10, from Saccharomyces cerevisiae.</title>
        <authorList>
            <person name="Enjo F."/>
            <person name="Nosaka K."/>
            <person name="Ogata M."/>
            <person name="Iwashima A."/>
            <person name="Nishimura H."/>
        </authorList>
    </citation>
    <scope>NUCLEOTIDE SEQUENCE [GENOMIC DNA]</scope>
    <source>
        <strain>S288c / GRF88</strain>
    </source>
</reference>
<reference key="2">
    <citation type="journal article" date="1997" name="Nature">
        <title>The nucleotide sequence of Saccharomyces cerevisiae chromosome XII.</title>
        <authorList>
            <person name="Johnston M."/>
            <person name="Hillier L.W."/>
            <person name="Riles L."/>
            <person name="Albermann K."/>
            <person name="Andre B."/>
            <person name="Ansorge W."/>
            <person name="Benes V."/>
            <person name="Brueckner M."/>
            <person name="Delius H."/>
            <person name="Dubois E."/>
            <person name="Duesterhoeft A."/>
            <person name="Entian K.-D."/>
            <person name="Floeth M."/>
            <person name="Goffeau A."/>
            <person name="Hebling U."/>
            <person name="Heumann K."/>
            <person name="Heuss-Neitzel D."/>
            <person name="Hilbert H."/>
            <person name="Hilger F."/>
            <person name="Kleine K."/>
            <person name="Koetter P."/>
            <person name="Louis E.J."/>
            <person name="Messenguy F."/>
            <person name="Mewes H.-W."/>
            <person name="Miosga T."/>
            <person name="Moestl D."/>
            <person name="Mueller-Auer S."/>
            <person name="Nentwich U."/>
            <person name="Obermaier B."/>
            <person name="Piravandi E."/>
            <person name="Pohl T.M."/>
            <person name="Portetelle D."/>
            <person name="Purnelle B."/>
            <person name="Rechmann S."/>
            <person name="Rieger M."/>
            <person name="Rinke M."/>
            <person name="Rose M."/>
            <person name="Scharfe M."/>
            <person name="Scherens B."/>
            <person name="Scholler P."/>
            <person name="Schwager C."/>
            <person name="Schwarz S."/>
            <person name="Underwood A.P."/>
            <person name="Urrestarazu L.A."/>
            <person name="Vandenbol M."/>
            <person name="Verhasselt P."/>
            <person name="Vierendeels F."/>
            <person name="Voet M."/>
            <person name="Volckaert G."/>
            <person name="Voss H."/>
            <person name="Wambutt R."/>
            <person name="Wedler E."/>
            <person name="Wedler H."/>
            <person name="Zimmermann F.K."/>
            <person name="Zollner A."/>
            <person name="Hani J."/>
            <person name="Hoheisel J.D."/>
        </authorList>
    </citation>
    <scope>NUCLEOTIDE SEQUENCE [LARGE SCALE GENOMIC DNA]</scope>
    <source>
        <strain>ATCC 204508 / S288c</strain>
    </source>
</reference>
<reference key="3">
    <citation type="journal article" date="2014" name="G3 (Bethesda)">
        <title>The reference genome sequence of Saccharomyces cerevisiae: Then and now.</title>
        <authorList>
            <person name="Engel S.R."/>
            <person name="Dietrich F.S."/>
            <person name="Fisk D.G."/>
            <person name="Binkley G."/>
            <person name="Balakrishnan R."/>
            <person name="Costanzo M.C."/>
            <person name="Dwight S.S."/>
            <person name="Hitz B.C."/>
            <person name="Karra K."/>
            <person name="Nash R.S."/>
            <person name="Weng S."/>
            <person name="Wong E.D."/>
            <person name="Lloyd P."/>
            <person name="Skrzypek M.S."/>
            <person name="Miyasato S.R."/>
            <person name="Simison M."/>
            <person name="Cherry J.M."/>
        </authorList>
    </citation>
    <scope>GENOME REANNOTATION</scope>
    <source>
        <strain>ATCC 204508 / S288c</strain>
    </source>
</reference>
<reference key="4">
    <citation type="journal article" date="2003" name="Nature">
        <title>Global analysis of protein expression in yeast.</title>
        <authorList>
            <person name="Ghaemmaghami S."/>
            <person name="Huh W.-K."/>
            <person name="Bower K."/>
            <person name="Howson R.W."/>
            <person name="Belle A."/>
            <person name="Dephoure N."/>
            <person name="O'Shea E.K."/>
            <person name="Weissman J.S."/>
        </authorList>
    </citation>
    <scope>LEVEL OF PROTEIN EXPRESSION [LARGE SCALE ANALYSIS]</scope>
</reference>
<reference key="5">
    <citation type="journal article" date="2006" name="Proc. Natl. Acad. Sci. U.S.A.">
        <title>A global topology map of the Saccharomyces cerevisiae membrane proteome.</title>
        <authorList>
            <person name="Kim H."/>
            <person name="Melen K."/>
            <person name="Oesterberg M."/>
            <person name="von Heijne G."/>
        </authorList>
    </citation>
    <scope>TOPOLOGY [LARGE SCALE ANALYSIS]</scope>
    <source>
        <strain>ATCC 208353 / W303-1A</strain>
    </source>
</reference>
<reference key="6">
    <citation type="journal article" date="2008" name="Mol. Cell. Proteomics">
        <title>A multidimensional chromatography technology for in-depth phosphoproteome analysis.</title>
        <authorList>
            <person name="Albuquerque C.P."/>
            <person name="Smolka M.B."/>
            <person name="Payne S.H."/>
            <person name="Bafna V."/>
            <person name="Eng J."/>
            <person name="Zhou H."/>
        </authorList>
    </citation>
    <scope>PHOSPHORYLATION [LARGE SCALE ANALYSIS] AT SER-560</scope>
    <scope>IDENTIFICATION BY MASS SPECTROMETRY [LARGE SCALE ANALYSIS]</scope>
</reference>
<reference key="7">
    <citation type="journal article" date="2009" name="Science">
        <title>Global analysis of Cdk1 substrate phosphorylation sites provides insights into evolution.</title>
        <authorList>
            <person name="Holt L.J."/>
            <person name="Tuch B.B."/>
            <person name="Villen J."/>
            <person name="Johnson A.D."/>
            <person name="Gygi S.P."/>
            <person name="Morgan D.O."/>
        </authorList>
    </citation>
    <scope>IDENTIFICATION BY MASS SPECTROMETRY [LARGE SCALE ANALYSIS]</scope>
</reference>
<keyword id="KW-0472">Membrane</keyword>
<keyword id="KW-0597">Phosphoprotein</keyword>
<keyword id="KW-1185">Reference proteome</keyword>
<keyword id="KW-0812">Transmembrane</keyword>
<keyword id="KW-1133">Transmembrane helix</keyword>
<keyword id="KW-0813">Transport</keyword>
<feature type="chain" id="PRO_0000197926" description="Thiamine transporter">
    <location>
        <begin position="1"/>
        <end position="598"/>
    </location>
</feature>
<feature type="topological domain" description="Cytoplasmic" evidence="1">
    <location>
        <begin position="1"/>
        <end position="41"/>
    </location>
</feature>
<feature type="transmembrane region" description="Helical" evidence="1">
    <location>
        <begin position="42"/>
        <end position="62"/>
    </location>
</feature>
<feature type="topological domain" description="Extracellular" evidence="1">
    <location>
        <begin position="63"/>
        <end position="73"/>
    </location>
</feature>
<feature type="transmembrane region" description="Helical" evidence="1">
    <location>
        <begin position="74"/>
        <end position="94"/>
    </location>
</feature>
<feature type="topological domain" description="Cytoplasmic" evidence="1">
    <location>
        <begin position="95"/>
        <end position="111"/>
    </location>
</feature>
<feature type="transmembrane region" description="Helical" evidence="1">
    <location>
        <begin position="112"/>
        <end position="132"/>
    </location>
</feature>
<feature type="topological domain" description="Extracellular" evidence="1">
    <location>
        <begin position="133"/>
        <end position="173"/>
    </location>
</feature>
<feature type="transmembrane region" description="Helical" evidence="1">
    <location>
        <begin position="174"/>
        <end position="194"/>
    </location>
</feature>
<feature type="topological domain" description="Cytoplasmic" evidence="1">
    <location>
        <begin position="195"/>
        <end position="197"/>
    </location>
</feature>
<feature type="transmembrane region" description="Helical" evidence="1">
    <location>
        <begin position="198"/>
        <end position="218"/>
    </location>
</feature>
<feature type="topological domain" description="Extracellular" evidence="1">
    <location>
        <begin position="219"/>
        <end position="240"/>
    </location>
</feature>
<feature type="transmembrane region" description="Helical" evidence="1">
    <location>
        <begin position="241"/>
        <end position="261"/>
    </location>
</feature>
<feature type="topological domain" description="Cytoplasmic" evidence="1">
    <location>
        <begin position="262"/>
        <end position="274"/>
    </location>
</feature>
<feature type="transmembrane region" description="Helical" evidence="1">
    <location>
        <begin position="275"/>
        <end position="295"/>
    </location>
</feature>
<feature type="topological domain" description="Extracellular" evidence="1">
    <location>
        <begin position="296"/>
        <end position="332"/>
    </location>
</feature>
<feature type="transmembrane region" description="Helical" evidence="1">
    <location>
        <begin position="333"/>
        <end position="353"/>
    </location>
</feature>
<feature type="topological domain" description="Cytoplasmic" evidence="1">
    <location>
        <begin position="354"/>
        <end position="371"/>
    </location>
</feature>
<feature type="transmembrane region" description="Helical" evidence="1">
    <location>
        <begin position="372"/>
        <end position="392"/>
    </location>
</feature>
<feature type="topological domain" description="Extracellular" evidence="1">
    <location>
        <begin position="393"/>
        <end position="394"/>
    </location>
</feature>
<feature type="transmembrane region" description="Helical" evidence="1">
    <location>
        <begin position="395"/>
        <end position="415"/>
    </location>
</feature>
<feature type="topological domain" description="Cytoplasmic" evidence="1">
    <location>
        <begin position="416"/>
        <end position="446"/>
    </location>
</feature>
<feature type="transmembrane region" description="Helical" evidence="1">
    <location>
        <begin position="447"/>
        <end position="467"/>
    </location>
</feature>
<feature type="topological domain" description="Extracellular" evidence="1">
    <location>
        <begin position="468"/>
        <end position="483"/>
    </location>
</feature>
<feature type="transmembrane region" description="Helical" evidence="1">
    <location>
        <begin position="484"/>
        <end position="504"/>
    </location>
</feature>
<feature type="topological domain" description="Cytoplasmic" evidence="1">
    <location>
        <begin position="505"/>
        <end position="598"/>
    </location>
</feature>
<feature type="region of interest" description="Disordered" evidence="2">
    <location>
        <begin position="574"/>
        <end position="598"/>
    </location>
</feature>
<feature type="compositionally biased region" description="Polar residues" evidence="2">
    <location>
        <begin position="588"/>
        <end position="598"/>
    </location>
</feature>
<feature type="modified residue" description="Phosphoserine" evidence="5">
    <location>
        <position position="560"/>
    </location>
</feature>
<proteinExistence type="evidence at protein level"/>
<dbReference type="EMBL" id="U19027">
    <property type="protein sequence ID" value="AAB67405.1"/>
    <property type="molecule type" value="Genomic_DNA"/>
</dbReference>
<dbReference type="EMBL" id="D55634">
    <property type="protein sequence ID" value="BAA09504.1"/>
    <property type="molecule type" value="Genomic_DNA"/>
</dbReference>
<dbReference type="EMBL" id="BK006945">
    <property type="protein sequence ID" value="DAA09551.1"/>
    <property type="molecule type" value="Genomic_DNA"/>
</dbReference>
<dbReference type="PIR" id="S51456">
    <property type="entry name" value="S51456"/>
</dbReference>
<dbReference type="RefSeq" id="NP_013338.1">
    <property type="nucleotide sequence ID" value="NM_001182124.1"/>
</dbReference>
<dbReference type="SMR" id="Q05998"/>
<dbReference type="BioGRID" id="31504">
    <property type="interactions" value="110"/>
</dbReference>
<dbReference type="DIP" id="DIP-4784N"/>
<dbReference type="FunCoup" id="Q05998">
    <property type="interactions" value="83"/>
</dbReference>
<dbReference type="IntAct" id="Q05998">
    <property type="interactions" value="3"/>
</dbReference>
<dbReference type="MINT" id="Q05998"/>
<dbReference type="STRING" id="4932.YLR237W"/>
<dbReference type="TCDB" id="2.A.39.4.1">
    <property type="family name" value="the nucleobase:cation symporter-1 (ncs1) family"/>
</dbReference>
<dbReference type="iPTMnet" id="Q05998"/>
<dbReference type="PaxDb" id="4932-YLR237W"/>
<dbReference type="PeptideAtlas" id="Q05998"/>
<dbReference type="EnsemblFungi" id="YLR237W_mRNA">
    <property type="protein sequence ID" value="YLR237W"/>
    <property type="gene ID" value="YLR237W"/>
</dbReference>
<dbReference type="GeneID" id="850938"/>
<dbReference type="KEGG" id="sce:YLR237W"/>
<dbReference type="AGR" id="SGD:S000004227"/>
<dbReference type="SGD" id="S000004227">
    <property type="gene designation" value="THI7"/>
</dbReference>
<dbReference type="VEuPathDB" id="FungiDB:YLR237W"/>
<dbReference type="eggNOG" id="KOG2466">
    <property type="taxonomic scope" value="Eukaryota"/>
</dbReference>
<dbReference type="GeneTree" id="ENSGT00940000176299"/>
<dbReference type="HOGENOM" id="CLU_021555_3_0_1"/>
<dbReference type="InParanoid" id="Q05998"/>
<dbReference type="OMA" id="AHMVTRD"/>
<dbReference type="OrthoDB" id="2018619at2759"/>
<dbReference type="BioCyc" id="YEAST:G3O-32346-MONOMER"/>
<dbReference type="BioGRID-ORCS" id="850938">
    <property type="hits" value="0 hits in 10 CRISPR screens"/>
</dbReference>
<dbReference type="PRO" id="PR:Q05998"/>
<dbReference type="Proteomes" id="UP000002311">
    <property type="component" value="Chromosome XII"/>
</dbReference>
<dbReference type="RNAct" id="Q05998">
    <property type="molecule type" value="protein"/>
</dbReference>
<dbReference type="GO" id="GO:0071944">
    <property type="term" value="C:cell periphery"/>
    <property type="evidence" value="ECO:0007005"/>
    <property type="project" value="SGD"/>
</dbReference>
<dbReference type="GO" id="GO:0005886">
    <property type="term" value="C:plasma membrane"/>
    <property type="evidence" value="ECO:0000314"/>
    <property type="project" value="SGD"/>
</dbReference>
<dbReference type="GO" id="GO:1903089">
    <property type="term" value="F:5-amino-1-ribofuranosylimidazole-4-carboxamide transmembrane transporter activity"/>
    <property type="evidence" value="ECO:0000316"/>
    <property type="project" value="SGD"/>
</dbReference>
<dbReference type="GO" id="GO:0015205">
    <property type="term" value="F:nucleobase transmembrane transporter activity"/>
    <property type="evidence" value="ECO:0000318"/>
    <property type="project" value="GO_Central"/>
</dbReference>
<dbReference type="GO" id="GO:0015234">
    <property type="term" value="F:thiamine transmembrane transporter activity"/>
    <property type="evidence" value="ECO:0000315"/>
    <property type="project" value="SGD"/>
</dbReference>
<dbReference type="GO" id="GO:1903088">
    <property type="term" value="P:5-amino-1-ribofuranosylimidazole-4-carboxamide transmembrane transport"/>
    <property type="evidence" value="ECO:0000316"/>
    <property type="project" value="SGD"/>
</dbReference>
<dbReference type="GO" id="GO:0015851">
    <property type="term" value="P:nucleobase transport"/>
    <property type="evidence" value="ECO:0000318"/>
    <property type="project" value="GO_Central"/>
</dbReference>
<dbReference type="GO" id="GO:0015888">
    <property type="term" value="P:thiamine transport"/>
    <property type="evidence" value="ECO:0000315"/>
    <property type="project" value="SGD"/>
</dbReference>
<dbReference type="CDD" id="cd11482">
    <property type="entry name" value="SLC-NCS1sbd_NRT1-like"/>
    <property type="match status" value="1"/>
</dbReference>
<dbReference type="FunFam" id="1.10.4160.10:FF:000005">
    <property type="entry name" value="Thiamine transporter"/>
    <property type="match status" value="1"/>
</dbReference>
<dbReference type="Gene3D" id="1.10.4160.10">
    <property type="entry name" value="Hydantoin permease"/>
    <property type="match status" value="1"/>
</dbReference>
<dbReference type="InterPro" id="IPR012681">
    <property type="entry name" value="NCS1"/>
</dbReference>
<dbReference type="InterPro" id="IPR001248">
    <property type="entry name" value="Pur-cyt_permease"/>
</dbReference>
<dbReference type="InterPro" id="IPR045225">
    <property type="entry name" value="Uracil/uridine/allantoin_perm"/>
</dbReference>
<dbReference type="NCBIfam" id="TIGR00800">
    <property type="entry name" value="ncs1"/>
    <property type="match status" value="1"/>
</dbReference>
<dbReference type="PANTHER" id="PTHR30618">
    <property type="entry name" value="NCS1 FAMILY PURINE/PYRIMIDINE TRANSPORTER"/>
    <property type="match status" value="1"/>
</dbReference>
<dbReference type="PANTHER" id="PTHR30618:SF15">
    <property type="entry name" value="NICOTINAMIDE RIBOSIDE TRANSPORTER 1-RELATED"/>
    <property type="match status" value="1"/>
</dbReference>
<dbReference type="Pfam" id="PF02133">
    <property type="entry name" value="Transp_cyt_pur"/>
    <property type="match status" value="1"/>
</dbReference>
<evidence type="ECO:0000255" key="1"/>
<evidence type="ECO:0000256" key="2">
    <source>
        <dbReference type="SAM" id="MobiDB-lite"/>
    </source>
</evidence>
<evidence type="ECO:0000269" key="3">
    <source>
    </source>
</evidence>
<evidence type="ECO:0000305" key="4"/>
<evidence type="ECO:0007744" key="5">
    <source>
    </source>
</evidence>
<sequence>MSFGSKVSRALRFLEIPVKDRASVSFLKNPDLQPIKSANQTWGFWSNFAYWGVMSFSVGTWMSASSALGVGLSYPETIGTFIVGDVLTIIFTLANSCPGYDWKVGFTLAQRFVFGIYGSAFGIIIRILMSIVNYGSNAWVGGLCINMILDSWSHHYLHLPNTLSSKVAMTTKELIGFIIFHVLTAFCYLMKPYHMNYILIWSCVATFFSMLGMVIYLAKQAHGVGELFTSTKSTATGSTKAWAWVYMISYWFGSVSPGSTNQSDYSRFGSSNWAIWAGTICALLIPTTLIPVFGVIGASTCDKLYGEQYWMPMDIFNHWLTTNYSAGARAGAFFCGLSFVLSQMSYTISNCGFASGMDLAGLLPKYVDIKRGALFAACVSWACLPWNFYNSSSTFLTVMSSFGVVMTPIISVMICDNFLIRKRQYSITNAFILKGEYYFTKGVNWRAIVAWVCGMTPGLPGIAWEVNNDYFHNTGIVNFFYGDSFFSFLISFFVYWGLCLLFPFKITVKHDDKDYYGAFTDEEARKKGMVPYSEISEEEIRAYTLGEGYTTGHEYRPEGSDDEIPELVKTSSENTNEFEIVHHKNNEKQSSTASEKAA</sequence>
<comment type="function">
    <text>Responsible for intake of thiamine.</text>
</comment>
<comment type="subcellular location">
    <subcellularLocation>
        <location>Membrane</location>
        <topology>Multi-pass membrane protein</topology>
    </subcellularLocation>
</comment>
<comment type="miscellaneous">
    <text evidence="3">Present with 3120 molecules/cell in log phase SD medium.</text>
</comment>
<comment type="similarity">
    <text evidence="4">Belongs to the purine-cytosine permease (2.A.39) family.</text>
</comment>
<accession>Q05998</accession>
<accession>D6VYN5</accession>
<accession>P87335</accession>
<protein>
    <recommendedName>
        <fullName>Thiamine transporter</fullName>
    </recommendedName>
</protein>
<gene>
    <name type="primary">THI7</name>
    <name type="synonym">THI10</name>
    <name type="ordered locus">YLR237W</name>
    <name type="ORF">L8083.2</name>
</gene>